<comment type="function">
    <text evidence="1">Catalyzes the formation of 4-diphosphocytidyl-2-C-methyl-D-erythritol from CTP and 2-C-methyl-D-erythritol 4-phosphate (MEP).</text>
</comment>
<comment type="catalytic activity">
    <reaction evidence="1">
        <text>2-C-methyl-D-erythritol 4-phosphate + CTP + H(+) = 4-CDP-2-C-methyl-D-erythritol + diphosphate</text>
        <dbReference type="Rhea" id="RHEA:13429"/>
        <dbReference type="ChEBI" id="CHEBI:15378"/>
        <dbReference type="ChEBI" id="CHEBI:33019"/>
        <dbReference type="ChEBI" id="CHEBI:37563"/>
        <dbReference type="ChEBI" id="CHEBI:57823"/>
        <dbReference type="ChEBI" id="CHEBI:58262"/>
        <dbReference type="EC" id="2.7.7.60"/>
    </reaction>
</comment>
<comment type="pathway">
    <text evidence="1">Isoprenoid biosynthesis; isopentenyl diphosphate biosynthesis via DXP pathway; isopentenyl diphosphate from 1-deoxy-D-xylulose 5-phosphate: step 2/6.</text>
</comment>
<comment type="similarity">
    <text evidence="1">Belongs to the IspD/TarI cytidylyltransferase family. IspD subfamily.</text>
</comment>
<organism>
    <name type="scientific">Stenotrophomonas maltophilia (strain K279a)</name>
    <dbReference type="NCBI Taxonomy" id="522373"/>
    <lineage>
        <taxon>Bacteria</taxon>
        <taxon>Pseudomonadati</taxon>
        <taxon>Pseudomonadota</taxon>
        <taxon>Gammaproteobacteria</taxon>
        <taxon>Lysobacterales</taxon>
        <taxon>Lysobacteraceae</taxon>
        <taxon>Stenotrophomonas</taxon>
        <taxon>Stenotrophomonas maltophilia group</taxon>
    </lineage>
</organism>
<protein>
    <recommendedName>
        <fullName evidence="1">2-C-methyl-D-erythritol 4-phosphate cytidylyltransferase</fullName>
        <ecNumber evidence="1">2.7.7.60</ecNumber>
    </recommendedName>
    <alternativeName>
        <fullName evidence="1">4-diphosphocytidyl-2C-methyl-D-erythritol synthase</fullName>
    </alternativeName>
    <alternativeName>
        <fullName evidence="1">MEP cytidylyltransferase</fullName>
        <shortName evidence="1">MCT</shortName>
    </alternativeName>
</protein>
<keyword id="KW-0414">Isoprene biosynthesis</keyword>
<keyword id="KW-0548">Nucleotidyltransferase</keyword>
<keyword id="KW-1185">Reference proteome</keyword>
<keyword id="KW-0808">Transferase</keyword>
<accession>B2FK90</accession>
<feature type="chain" id="PRO_1000094352" description="2-C-methyl-D-erythritol 4-phosphate cytidylyltransferase">
    <location>
        <begin position="1"/>
        <end position="232"/>
    </location>
</feature>
<feature type="site" description="Transition state stabilizer" evidence="1">
    <location>
        <position position="17"/>
    </location>
</feature>
<feature type="site" description="Transition state stabilizer" evidence="1">
    <location>
        <position position="24"/>
    </location>
</feature>
<feature type="site" description="Positions MEP for the nucleophilic attack" evidence="1">
    <location>
        <position position="157"/>
    </location>
</feature>
<feature type="site" description="Positions MEP for the nucleophilic attack" evidence="1">
    <location>
        <position position="213"/>
    </location>
</feature>
<dbReference type="EC" id="2.7.7.60" evidence="1"/>
<dbReference type="EMBL" id="AM743169">
    <property type="protein sequence ID" value="CAQ45241.1"/>
    <property type="molecule type" value="Genomic_DNA"/>
</dbReference>
<dbReference type="RefSeq" id="WP_005409004.1">
    <property type="nucleotide sequence ID" value="NC_010943.1"/>
</dbReference>
<dbReference type="SMR" id="B2FK90"/>
<dbReference type="EnsemblBacteria" id="CAQ45241">
    <property type="protein sequence ID" value="CAQ45241"/>
    <property type="gene ID" value="Smlt1717"/>
</dbReference>
<dbReference type="GeneID" id="93832885"/>
<dbReference type="KEGG" id="sml:Smlt1717"/>
<dbReference type="eggNOG" id="COG1211">
    <property type="taxonomic scope" value="Bacteria"/>
</dbReference>
<dbReference type="HOGENOM" id="CLU_061281_3_1_6"/>
<dbReference type="UniPathway" id="UPA00056">
    <property type="reaction ID" value="UER00093"/>
</dbReference>
<dbReference type="Proteomes" id="UP000008840">
    <property type="component" value="Chromosome"/>
</dbReference>
<dbReference type="GO" id="GO:0050518">
    <property type="term" value="F:2-C-methyl-D-erythritol 4-phosphate cytidylyltransferase activity"/>
    <property type="evidence" value="ECO:0007669"/>
    <property type="project" value="UniProtKB-UniRule"/>
</dbReference>
<dbReference type="GO" id="GO:0019288">
    <property type="term" value="P:isopentenyl diphosphate biosynthetic process, methylerythritol 4-phosphate pathway"/>
    <property type="evidence" value="ECO:0007669"/>
    <property type="project" value="UniProtKB-UniRule"/>
</dbReference>
<dbReference type="CDD" id="cd02516">
    <property type="entry name" value="CDP-ME_synthetase"/>
    <property type="match status" value="1"/>
</dbReference>
<dbReference type="FunFam" id="3.90.550.10:FF:000003">
    <property type="entry name" value="2-C-methyl-D-erythritol 4-phosphate cytidylyltransferase"/>
    <property type="match status" value="1"/>
</dbReference>
<dbReference type="Gene3D" id="3.90.550.10">
    <property type="entry name" value="Spore Coat Polysaccharide Biosynthesis Protein SpsA, Chain A"/>
    <property type="match status" value="1"/>
</dbReference>
<dbReference type="HAMAP" id="MF_00108">
    <property type="entry name" value="IspD"/>
    <property type="match status" value="1"/>
</dbReference>
<dbReference type="InterPro" id="IPR001228">
    <property type="entry name" value="IspD"/>
</dbReference>
<dbReference type="InterPro" id="IPR034683">
    <property type="entry name" value="IspD/TarI"/>
</dbReference>
<dbReference type="InterPro" id="IPR050088">
    <property type="entry name" value="IspD/TarI_cytidylyltransf_bact"/>
</dbReference>
<dbReference type="InterPro" id="IPR018294">
    <property type="entry name" value="ISPD_synthase_CS"/>
</dbReference>
<dbReference type="InterPro" id="IPR029044">
    <property type="entry name" value="Nucleotide-diphossugar_trans"/>
</dbReference>
<dbReference type="NCBIfam" id="TIGR00453">
    <property type="entry name" value="ispD"/>
    <property type="match status" value="1"/>
</dbReference>
<dbReference type="PANTHER" id="PTHR32125">
    <property type="entry name" value="2-C-METHYL-D-ERYTHRITOL 4-PHOSPHATE CYTIDYLYLTRANSFERASE, CHLOROPLASTIC"/>
    <property type="match status" value="1"/>
</dbReference>
<dbReference type="PANTHER" id="PTHR32125:SF4">
    <property type="entry name" value="2-C-METHYL-D-ERYTHRITOL 4-PHOSPHATE CYTIDYLYLTRANSFERASE, CHLOROPLASTIC"/>
    <property type="match status" value="1"/>
</dbReference>
<dbReference type="Pfam" id="PF01128">
    <property type="entry name" value="IspD"/>
    <property type="match status" value="1"/>
</dbReference>
<dbReference type="SUPFAM" id="SSF53448">
    <property type="entry name" value="Nucleotide-diphospho-sugar transferases"/>
    <property type="match status" value="1"/>
</dbReference>
<dbReference type="PROSITE" id="PS01295">
    <property type="entry name" value="ISPD"/>
    <property type="match status" value="1"/>
</dbReference>
<sequence length="232" mass="24649">MSAAIWVVVPAAGRGTRFGAPLPKQYLQAGGQILLAHTLDALLAHPAVAGAMVVIGQDDADWPGWNEWAGKPVLTCIGGATRAASVLAGLQALPETVRADEFVLVHDAARPNLSPADLGRLLEVGRTDPVGAILAAPVRDTLKRAGDDGGIDGTEPRERLWRALTPQLFRRHQLSRALSDAAAAGVEVTDEAMAMERQGQRPLLVEGSEDNFKVTTPADLDRFEFVLSRRAG</sequence>
<reference key="1">
    <citation type="journal article" date="2008" name="Genome Biol.">
        <title>The complete genome, comparative and functional analysis of Stenotrophomonas maltophilia reveals an organism heavily shielded by drug resistance determinants.</title>
        <authorList>
            <person name="Crossman L.C."/>
            <person name="Gould V.C."/>
            <person name="Dow J.M."/>
            <person name="Vernikos G.S."/>
            <person name="Okazaki A."/>
            <person name="Sebaihia M."/>
            <person name="Saunders D."/>
            <person name="Arrowsmith C."/>
            <person name="Carver T."/>
            <person name="Peters N."/>
            <person name="Adlem E."/>
            <person name="Kerhornou A."/>
            <person name="Lord A."/>
            <person name="Murphy L."/>
            <person name="Seeger K."/>
            <person name="Squares R."/>
            <person name="Rutter S."/>
            <person name="Quail M.A."/>
            <person name="Rajandream M.A."/>
            <person name="Harris D."/>
            <person name="Churcher C."/>
            <person name="Bentley S.D."/>
            <person name="Parkhill J."/>
            <person name="Thomson N.R."/>
            <person name="Avison M.B."/>
        </authorList>
    </citation>
    <scope>NUCLEOTIDE SEQUENCE [LARGE SCALE GENOMIC DNA]</scope>
    <source>
        <strain>K279a</strain>
    </source>
</reference>
<evidence type="ECO:0000255" key="1">
    <source>
        <dbReference type="HAMAP-Rule" id="MF_00108"/>
    </source>
</evidence>
<gene>
    <name evidence="1" type="primary">ispD</name>
    <name type="ordered locus">Smlt1717</name>
</gene>
<proteinExistence type="inferred from homology"/>
<name>ISPD_STRMK</name>